<keyword id="KW-0963">Cytoplasm</keyword>
<keyword id="KW-1185">Reference proteome</keyword>
<keyword id="KW-0690">Ribosome biogenesis</keyword>
<sequence length="135" mass="15367">MAKQQTSPETRSVRLLKVGEQVRHILSELLARQEVHDDVLSAHTVSVTEVRMSPDLRHATVFIKALLGEDEDLVLKALRTNTAFFQREVAQRLRLKYAARLKFLADESFDVASKIETLLADPKVQRDLRDQESDG</sequence>
<reference key="1">
    <citation type="submission" date="2006-01" db="EMBL/GenBank/DDBJ databases">
        <title>Complete sequence of Novosphingobium aromaticivorans DSM 12444.</title>
        <authorList>
            <consortium name="US DOE Joint Genome Institute"/>
            <person name="Copeland A."/>
            <person name="Lucas S."/>
            <person name="Lapidus A."/>
            <person name="Barry K."/>
            <person name="Detter J.C."/>
            <person name="Glavina T."/>
            <person name="Hammon N."/>
            <person name="Israni S."/>
            <person name="Pitluck S."/>
            <person name="Chain P."/>
            <person name="Malfatti S."/>
            <person name="Shin M."/>
            <person name="Vergez L."/>
            <person name="Schmutz J."/>
            <person name="Larimer F."/>
            <person name="Land M."/>
            <person name="Kyrpides N."/>
            <person name="Ivanova N."/>
            <person name="Fredrickson J."/>
            <person name="Balkwill D."/>
            <person name="Romine M.F."/>
            <person name="Richardson P."/>
        </authorList>
    </citation>
    <scope>NUCLEOTIDE SEQUENCE [LARGE SCALE GENOMIC DNA]</scope>
    <source>
        <strain>ATCC 700278 / DSM 12444 / CCUG 56034 / CIP 105152 / NBRC 16084 / F199</strain>
    </source>
</reference>
<organism>
    <name type="scientific">Novosphingobium aromaticivorans (strain ATCC 700278 / DSM 12444 / CCUG 56034 / CIP 105152 / NBRC 16084 / F199)</name>
    <dbReference type="NCBI Taxonomy" id="279238"/>
    <lineage>
        <taxon>Bacteria</taxon>
        <taxon>Pseudomonadati</taxon>
        <taxon>Pseudomonadota</taxon>
        <taxon>Alphaproteobacteria</taxon>
        <taxon>Sphingomonadales</taxon>
        <taxon>Sphingomonadaceae</taxon>
        <taxon>Novosphingobium</taxon>
    </lineage>
</organism>
<feature type="chain" id="PRO_0000321234" description="Ribosome-binding factor A">
    <location>
        <begin position="1"/>
        <end position="135"/>
    </location>
</feature>
<dbReference type="EMBL" id="CP000248">
    <property type="protein sequence ID" value="ABD26924.1"/>
    <property type="molecule type" value="Genomic_DNA"/>
</dbReference>
<dbReference type="RefSeq" id="WP_011446130.1">
    <property type="nucleotide sequence ID" value="NC_007794.1"/>
</dbReference>
<dbReference type="SMR" id="Q2G5E9"/>
<dbReference type="STRING" id="279238.Saro_2488"/>
<dbReference type="KEGG" id="nar:Saro_2488"/>
<dbReference type="eggNOG" id="COG0858">
    <property type="taxonomic scope" value="Bacteria"/>
</dbReference>
<dbReference type="HOGENOM" id="CLU_089475_1_0_5"/>
<dbReference type="Proteomes" id="UP000009134">
    <property type="component" value="Chromosome"/>
</dbReference>
<dbReference type="GO" id="GO:0005829">
    <property type="term" value="C:cytosol"/>
    <property type="evidence" value="ECO:0007669"/>
    <property type="project" value="TreeGrafter"/>
</dbReference>
<dbReference type="GO" id="GO:0043024">
    <property type="term" value="F:ribosomal small subunit binding"/>
    <property type="evidence" value="ECO:0007669"/>
    <property type="project" value="TreeGrafter"/>
</dbReference>
<dbReference type="GO" id="GO:0030490">
    <property type="term" value="P:maturation of SSU-rRNA"/>
    <property type="evidence" value="ECO:0007669"/>
    <property type="project" value="UniProtKB-UniRule"/>
</dbReference>
<dbReference type="Gene3D" id="3.30.300.20">
    <property type="match status" value="1"/>
</dbReference>
<dbReference type="HAMAP" id="MF_00003">
    <property type="entry name" value="RbfA"/>
    <property type="match status" value="1"/>
</dbReference>
<dbReference type="InterPro" id="IPR015946">
    <property type="entry name" value="KH_dom-like_a/b"/>
</dbReference>
<dbReference type="InterPro" id="IPR000238">
    <property type="entry name" value="RbfA"/>
</dbReference>
<dbReference type="InterPro" id="IPR023799">
    <property type="entry name" value="RbfA_dom_sf"/>
</dbReference>
<dbReference type="NCBIfam" id="NF001802">
    <property type="entry name" value="PRK00521.2-5"/>
    <property type="match status" value="1"/>
</dbReference>
<dbReference type="NCBIfam" id="TIGR00082">
    <property type="entry name" value="rbfA"/>
    <property type="match status" value="1"/>
</dbReference>
<dbReference type="PANTHER" id="PTHR33515">
    <property type="entry name" value="RIBOSOME-BINDING FACTOR A, CHLOROPLASTIC-RELATED"/>
    <property type="match status" value="1"/>
</dbReference>
<dbReference type="PANTHER" id="PTHR33515:SF1">
    <property type="entry name" value="RIBOSOME-BINDING FACTOR A, CHLOROPLASTIC-RELATED"/>
    <property type="match status" value="1"/>
</dbReference>
<dbReference type="Pfam" id="PF02033">
    <property type="entry name" value="RBFA"/>
    <property type="match status" value="1"/>
</dbReference>
<dbReference type="SUPFAM" id="SSF89919">
    <property type="entry name" value="Ribosome-binding factor A, RbfA"/>
    <property type="match status" value="1"/>
</dbReference>
<name>RBFA_NOVAD</name>
<comment type="function">
    <text evidence="1">One of several proteins that assist in the late maturation steps of the functional core of the 30S ribosomal subunit. Associates with free 30S ribosomal subunits (but not with 30S subunits that are part of 70S ribosomes or polysomes). Required for efficient processing of 16S rRNA. May interact with the 5'-terminal helix region of 16S rRNA.</text>
</comment>
<comment type="subunit">
    <text evidence="1">Monomer. Binds 30S ribosomal subunits, but not 50S ribosomal subunits or 70S ribosomes.</text>
</comment>
<comment type="subcellular location">
    <subcellularLocation>
        <location evidence="1">Cytoplasm</location>
    </subcellularLocation>
</comment>
<comment type="similarity">
    <text evidence="1">Belongs to the RbfA family.</text>
</comment>
<gene>
    <name evidence="1" type="primary">rbfA</name>
    <name type="ordered locus">Saro_2488</name>
</gene>
<evidence type="ECO:0000255" key="1">
    <source>
        <dbReference type="HAMAP-Rule" id="MF_00003"/>
    </source>
</evidence>
<protein>
    <recommendedName>
        <fullName evidence="1">Ribosome-binding factor A</fullName>
    </recommendedName>
</protein>
<proteinExistence type="inferred from homology"/>
<accession>Q2G5E9</accession>